<feature type="chain" id="PRO_0000166743" description="Thioredoxin reductase">
    <location>
        <begin position="1"/>
        <end position="310"/>
    </location>
</feature>
<feature type="binding site" evidence="2">
    <location>
        <begin position="34"/>
        <end position="41"/>
    </location>
    <ligand>
        <name>FAD</name>
        <dbReference type="ChEBI" id="CHEBI:57692"/>
    </ligand>
</feature>
<feature type="binding site" evidence="2">
    <location>
        <begin position="281"/>
        <end position="290"/>
    </location>
    <ligand>
        <name>FAD</name>
        <dbReference type="ChEBI" id="CHEBI:57692"/>
    </ligand>
</feature>
<feature type="disulfide bond" description="Redox-active" evidence="2">
    <location>
        <begin position="135"/>
        <end position="138"/>
    </location>
</feature>
<proteinExistence type="inferred from homology"/>
<accession>Q9ZD97</accession>
<comment type="catalytic activity">
    <reaction>
        <text>[thioredoxin]-dithiol + NADP(+) = [thioredoxin]-disulfide + NADPH + H(+)</text>
        <dbReference type="Rhea" id="RHEA:20345"/>
        <dbReference type="Rhea" id="RHEA-COMP:10698"/>
        <dbReference type="Rhea" id="RHEA-COMP:10700"/>
        <dbReference type="ChEBI" id="CHEBI:15378"/>
        <dbReference type="ChEBI" id="CHEBI:29950"/>
        <dbReference type="ChEBI" id="CHEBI:50058"/>
        <dbReference type="ChEBI" id="CHEBI:57783"/>
        <dbReference type="ChEBI" id="CHEBI:58349"/>
        <dbReference type="EC" id="1.8.1.9"/>
    </reaction>
</comment>
<comment type="cofactor">
    <cofactor evidence="2">
        <name>FAD</name>
        <dbReference type="ChEBI" id="CHEBI:57692"/>
    </cofactor>
    <text evidence="2">Binds 1 FAD per subunit.</text>
</comment>
<comment type="subunit">
    <text evidence="2">Homodimer.</text>
</comment>
<comment type="subcellular location">
    <subcellularLocation>
        <location evidence="1">Cytoplasm</location>
    </subcellularLocation>
</comment>
<comment type="miscellaneous">
    <text>The active site is a redox-active disulfide bond.</text>
</comment>
<comment type="similarity">
    <text evidence="3">Belongs to the class-II pyridine nucleotide-disulfide oxidoreductase family.</text>
</comment>
<protein>
    <recommendedName>
        <fullName>Thioredoxin reductase</fullName>
        <shortName>TRXR</shortName>
        <ecNumber>1.8.1.9</ecNumber>
    </recommendedName>
</protein>
<organism>
    <name type="scientific">Rickettsia prowazekii (strain Madrid E)</name>
    <dbReference type="NCBI Taxonomy" id="272947"/>
    <lineage>
        <taxon>Bacteria</taxon>
        <taxon>Pseudomonadati</taxon>
        <taxon>Pseudomonadota</taxon>
        <taxon>Alphaproteobacteria</taxon>
        <taxon>Rickettsiales</taxon>
        <taxon>Rickettsiaceae</taxon>
        <taxon>Rickettsieae</taxon>
        <taxon>Rickettsia</taxon>
        <taxon>typhus group</taxon>
    </lineage>
</organism>
<reference key="1">
    <citation type="journal article" date="1998" name="Nature">
        <title>The genome sequence of Rickettsia prowazekii and the origin of mitochondria.</title>
        <authorList>
            <person name="Andersson S.G.E."/>
            <person name="Zomorodipour A."/>
            <person name="Andersson J.O."/>
            <person name="Sicheritz-Ponten T."/>
            <person name="Alsmark U.C.M."/>
            <person name="Podowski R.M."/>
            <person name="Naeslund A.K."/>
            <person name="Eriksson A.-S."/>
            <person name="Winkler H.H."/>
            <person name="Kurland C.G."/>
        </authorList>
    </citation>
    <scope>NUCLEOTIDE SEQUENCE [LARGE SCALE GENOMIC DNA]</scope>
    <source>
        <strain>Madrid E</strain>
    </source>
</reference>
<dbReference type="EC" id="1.8.1.9"/>
<dbReference type="EMBL" id="AJ235271">
    <property type="protein sequence ID" value="CAA14902.1"/>
    <property type="molecule type" value="Genomic_DNA"/>
</dbReference>
<dbReference type="PIR" id="D71703">
    <property type="entry name" value="D71703"/>
</dbReference>
<dbReference type="RefSeq" id="NP_220826.1">
    <property type="nucleotide sequence ID" value="NC_000963.1"/>
</dbReference>
<dbReference type="RefSeq" id="WP_004597668.1">
    <property type="nucleotide sequence ID" value="NC_000963.1"/>
</dbReference>
<dbReference type="SMR" id="Q9ZD97"/>
<dbReference type="STRING" id="272947.gene:17555525"/>
<dbReference type="EnsemblBacteria" id="CAA14902">
    <property type="protein sequence ID" value="CAA14902"/>
    <property type="gene ID" value="CAA14902"/>
</dbReference>
<dbReference type="KEGG" id="rpr:RP445"/>
<dbReference type="PATRIC" id="fig|272947.5.peg.458"/>
<dbReference type="eggNOG" id="COG0492">
    <property type="taxonomic scope" value="Bacteria"/>
</dbReference>
<dbReference type="HOGENOM" id="CLU_031864_5_1_5"/>
<dbReference type="OrthoDB" id="9806179at2"/>
<dbReference type="Proteomes" id="UP000002480">
    <property type="component" value="Chromosome"/>
</dbReference>
<dbReference type="GO" id="GO:0005737">
    <property type="term" value="C:cytoplasm"/>
    <property type="evidence" value="ECO:0007669"/>
    <property type="project" value="UniProtKB-SubCell"/>
</dbReference>
<dbReference type="GO" id="GO:0004791">
    <property type="term" value="F:thioredoxin-disulfide reductase (NADPH) activity"/>
    <property type="evidence" value="ECO:0007669"/>
    <property type="project" value="UniProtKB-EC"/>
</dbReference>
<dbReference type="GO" id="GO:0019430">
    <property type="term" value="P:removal of superoxide radicals"/>
    <property type="evidence" value="ECO:0007669"/>
    <property type="project" value="InterPro"/>
</dbReference>
<dbReference type="Gene3D" id="3.50.50.60">
    <property type="entry name" value="FAD/NAD(P)-binding domain"/>
    <property type="match status" value="2"/>
</dbReference>
<dbReference type="InterPro" id="IPR036188">
    <property type="entry name" value="FAD/NAD-bd_sf"/>
</dbReference>
<dbReference type="InterPro" id="IPR023753">
    <property type="entry name" value="FAD/NAD-binding_dom"/>
</dbReference>
<dbReference type="InterPro" id="IPR050097">
    <property type="entry name" value="Ferredoxin-NADP_redctase_2"/>
</dbReference>
<dbReference type="InterPro" id="IPR008255">
    <property type="entry name" value="Pyr_nucl-diS_OxRdtase_2_AS"/>
</dbReference>
<dbReference type="InterPro" id="IPR005982">
    <property type="entry name" value="Thioredox_Rdtase"/>
</dbReference>
<dbReference type="NCBIfam" id="TIGR01292">
    <property type="entry name" value="TRX_reduct"/>
    <property type="match status" value="1"/>
</dbReference>
<dbReference type="PANTHER" id="PTHR48105">
    <property type="entry name" value="THIOREDOXIN REDUCTASE 1-RELATED-RELATED"/>
    <property type="match status" value="1"/>
</dbReference>
<dbReference type="Pfam" id="PF07992">
    <property type="entry name" value="Pyr_redox_2"/>
    <property type="match status" value="1"/>
</dbReference>
<dbReference type="PRINTS" id="PR00368">
    <property type="entry name" value="FADPNR"/>
</dbReference>
<dbReference type="PRINTS" id="PR00469">
    <property type="entry name" value="PNDRDTASEII"/>
</dbReference>
<dbReference type="SUPFAM" id="SSF51905">
    <property type="entry name" value="FAD/NAD(P)-binding domain"/>
    <property type="match status" value="1"/>
</dbReference>
<dbReference type="PROSITE" id="PS00573">
    <property type="entry name" value="PYRIDINE_REDOX_2"/>
    <property type="match status" value="1"/>
</dbReference>
<keyword id="KW-0963">Cytoplasm</keyword>
<keyword id="KW-1015">Disulfide bond</keyword>
<keyword id="KW-0274">FAD</keyword>
<keyword id="KW-0285">Flavoprotein</keyword>
<keyword id="KW-0521">NADP</keyword>
<keyword id="KW-0560">Oxidoreductase</keyword>
<keyword id="KW-0676">Redox-active center</keyword>
<keyword id="KW-1185">Reference proteome</keyword>
<gene>
    <name type="primary">trxB</name>
    <name type="ordered locus">RP445</name>
</gene>
<name>TRXB_RICPR</name>
<evidence type="ECO:0000250" key="1"/>
<evidence type="ECO:0000250" key="2">
    <source>
        <dbReference type="UniProtKB" id="P0A9P4"/>
    </source>
</evidence>
<evidence type="ECO:0000305" key="3"/>
<sequence>MKITTKVLIIGSGPAGLSAAIYTARSALKPILINGMQPGGQLTMTTDVENYPGFAETIQGPWLMEQMSMQAKNVGTEIISDYVERVDLSKRPFKIFTGTGNEYEADSIIICTGAESKWLGIASEQEFRGFGVSSCAICDGFFFKNQEIVVVGGGNSALEEALYLTNHANKVTVVHRRNSFRAEKILQDRLFKNPKISVIWDHIIDEIVGSNKPKAVTGVKIQNVYTNEINLVNCSGVFIAIGHAPNTALFKGQIAIDDDNYIVTQSGSTRTNVEGVFAAGDVQDKIYRQAVTAAASGCMAALEVAKFLNK</sequence>